<organism>
    <name type="scientific">Rhizobium etli (strain ATCC 51251 / DSM 11541 / JCM 21823 / NBRC 15573 / CFN 42)</name>
    <dbReference type="NCBI Taxonomy" id="347834"/>
    <lineage>
        <taxon>Bacteria</taxon>
        <taxon>Pseudomonadati</taxon>
        <taxon>Pseudomonadota</taxon>
        <taxon>Alphaproteobacteria</taxon>
        <taxon>Hyphomicrobiales</taxon>
        <taxon>Rhizobiaceae</taxon>
        <taxon>Rhizobium/Agrobacterium group</taxon>
        <taxon>Rhizobium</taxon>
    </lineage>
</organism>
<reference key="1">
    <citation type="journal article" date="2006" name="Proc. Natl. Acad. Sci. U.S.A.">
        <title>The partitioned Rhizobium etli genome: genetic and metabolic redundancy in seven interacting replicons.</title>
        <authorList>
            <person name="Gonzalez V."/>
            <person name="Santamaria R.I."/>
            <person name="Bustos P."/>
            <person name="Hernandez-Gonzalez I."/>
            <person name="Medrano-Soto A."/>
            <person name="Moreno-Hagelsieb G."/>
            <person name="Janga S.C."/>
            <person name="Ramirez M.A."/>
            <person name="Jimenez-Jacinto V."/>
            <person name="Collado-Vides J."/>
            <person name="Davila G."/>
        </authorList>
    </citation>
    <scope>NUCLEOTIDE SEQUENCE [LARGE SCALE GENOMIC DNA]</scope>
    <source>
        <strain>ATCC 51251 / DSM 11541 / JCM 21823 / NBRC 15573 / CFN 42</strain>
    </source>
</reference>
<dbReference type="EMBL" id="CP000133">
    <property type="protein sequence ID" value="ABC89459.1"/>
    <property type="molecule type" value="Genomic_DNA"/>
</dbReference>
<dbReference type="RefSeq" id="WP_011424008.1">
    <property type="nucleotide sequence ID" value="NC_007761.1"/>
</dbReference>
<dbReference type="SMR" id="Q2KCH7"/>
<dbReference type="KEGG" id="ret:RHE_CH00644"/>
<dbReference type="eggNOG" id="COG0745">
    <property type="taxonomic scope" value="Bacteria"/>
</dbReference>
<dbReference type="HOGENOM" id="CLU_000445_69_12_5"/>
<dbReference type="OrthoDB" id="9786548at2"/>
<dbReference type="Proteomes" id="UP000001936">
    <property type="component" value="Chromosome"/>
</dbReference>
<dbReference type="GO" id="GO:0005737">
    <property type="term" value="C:cytoplasm"/>
    <property type="evidence" value="ECO:0007669"/>
    <property type="project" value="UniProtKB-SubCell"/>
</dbReference>
<dbReference type="GO" id="GO:0046872">
    <property type="term" value="F:metal ion binding"/>
    <property type="evidence" value="ECO:0007669"/>
    <property type="project" value="UniProtKB-KW"/>
</dbReference>
<dbReference type="GO" id="GO:0006935">
    <property type="term" value="P:chemotaxis"/>
    <property type="evidence" value="ECO:0007669"/>
    <property type="project" value="UniProtKB-KW"/>
</dbReference>
<dbReference type="GO" id="GO:0000160">
    <property type="term" value="P:phosphorelay signal transduction system"/>
    <property type="evidence" value="ECO:0007669"/>
    <property type="project" value="UniProtKB-KW"/>
</dbReference>
<dbReference type="FunFam" id="3.40.50.2300:FF:000091">
    <property type="entry name" value="Chemotaxis two-component response regulator protein"/>
    <property type="match status" value="1"/>
</dbReference>
<dbReference type="Gene3D" id="3.40.50.2300">
    <property type="match status" value="1"/>
</dbReference>
<dbReference type="InterPro" id="IPR011006">
    <property type="entry name" value="CheY-like_superfamily"/>
</dbReference>
<dbReference type="InterPro" id="IPR001789">
    <property type="entry name" value="Sig_transdc_resp-reg_receiver"/>
</dbReference>
<dbReference type="InterPro" id="IPR052048">
    <property type="entry name" value="ST_Response_Regulator"/>
</dbReference>
<dbReference type="PANTHER" id="PTHR43228">
    <property type="entry name" value="TWO-COMPONENT RESPONSE REGULATOR"/>
    <property type="match status" value="1"/>
</dbReference>
<dbReference type="PANTHER" id="PTHR43228:SF1">
    <property type="entry name" value="TWO-COMPONENT RESPONSE REGULATOR ARR22"/>
    <property type="match status" value="1"/>
</dbReference>
<dbReference type="Pfam" id="PF00072">
    <property type="entry name" value="Response_reg"/>
    <property type="match status" value="1"/>
</dbReference>
<dbReference type="SMART" id="SM00448">
    <property type="entry name" value="REC"/>
    <property type="match status" value="1"/>
</dbReference>
<dbReference type="SUPFAM" id="SSF52172">
    <property type="entry name" value="CheY-like"/>
    <property type="match status" value="1"/>
</dbReference>
<dbReference type="PROSITE" id="PS50110">
    <property type="entry name" value="RESPONSE_REGULATORY"/>
    <property type="match status" value="1"/>
</dbReference>
<accession>Q2KCH7</accession>
<comment type="function">
    <text evidence="2">Involved in the transmission of sensory signals from the chemoreceptors to the flagellar motors. CheY seems to regulate the clockwise (CW) rotation (By similarity).</text>
</comment>
<comment type="cofactor">
    <cofactor evidence="2">
        <name>Mg(2+)</name>
        <dbReference type="ChEBI" id="CHEBI:18420"/>
    </cofactor>
    <text evidence="2">Binds 1 Mg(2+) ion per subunit.</text>
</comment>
<comment type="subcellular location">
    <subcellularLocation>
        <location evidence="4">Cytoplasm</location>
    </subcellularLocation>
</comment>
<sequence>MSIAEKIKVLIVDDQVTSRLLLSDALTQLGFKQITSAGDGEQGMKIMTEQPHHLVISDFNMPKMDGIGFLQAVRTNPNTKKAAFIILTAQGDRALVQRAAQLGANNVLAKPFTIEKMKAAIEAVFGALK</sequence>
<proteinExistence type="inferred from homology"/>
<keyword id="KW-0145">Chemotaxis</keyword>
<keyword id="KW-0963">Cytoplasm</keyword>
<keyword id="KW-0460">Magnesium</keyword>
<keyword id="KW-0479">Metal-binding</keyword>
<keyword id="KW-0597">Phosphoprotein</keyword>
<keyword id="KW-1185">Reference proteome</keyword>
<keyword id="KW-0902">Two-component regulatory system</keyword>
<name>CHEY_RHIEC</name>
<feature type="chain" id="PRO_0000239044" description="Probable chemotaxis protein CheY">
    <location>
        <begin position="1"/>
        <end position="129"/>
    </location>
</feature>
<feature type="domain" description="Response regulatory" evidence="3">
    <location>
        <begin position="8"/>
        <end position="125"/>
    </location>
</feature>
<feature type="binding site" evidence="1">
    <location>
        <position position="13"/>
    </location>
    <ligand>
        <name>Mg(2+)</name>
        <dbReference type="ChEBI" id="CHEBI:18420"/>
    </ligand>
</feature>
<feature type="binding site" evidence="2">
    <location>
        <position position="14"/>
    </location>
    <ligand>
        <name>Mg(2+)</name>
        <dbReference type="ChEBI" id="CHEBI:18420"/>
    </ligand>
</feature>
<feature type="binding site" evidence="2">
    <location>
        <position position="58"/>
    </location>
    <ligand>
        <name>Mg(2+)</name>
        <dbReference type="ChEBI" id="CHEBI:18420"/>
    </ligand>
</feature>
<feature type="binding site" evidence="2">
    <location>
        <position position="60"/>
    </location>
    <ligand>
        <name>Mg(2+)</name>
        <dbReference type="ChEBI" id="CHEBI:18420"/>
    </ligand>
</feature>
<feature type="modified residue" description="4-aspartylphosphate" evidence="3">
    <location>
        <position position="58"/>
    </location>
</feature>
<gene>
    <name type="primary">cheY</name>
    <name type="ordered locus">RHE_CH00643</name>
    <name type="ORF">RHE_CH00644</name>
</gene>
<protein>
    <recommendedName>
        <fullName>Probable chemotaxis protein CheY</fullName>
    </recommendedName>
</protein>
<evidence type="ECO:0000250" key="1">
    <source>
        <dbReference type="UniProtKB" id="A0A0H3AMJ9"/>
    </source>
</evidence>
<evidence type="ECO:0000250" key="2">
    <source>
        <dbReference type="UniProtKB" id="P0AE67"/>
    </source>
</evidence>
<evidence type="ECO:0000255" key="3">
    <source>
        <dbReference type="PROSITE-ProRule" id="PRU00169"/>
    </source>
</evidence>
<evidence type="ECO:0000305" key="4"/>